<organism>
    <name type="scientific">Rattus norvegicus</name>
    <name type="common">Rat</name>
    <dbReference type="NCBI Taxonomy" id="10116"/>
    <lineage>
        <taxon>Eukaryota</taxon>
        <taxon>Metazoa</taxon>
        <taxon>Chordata</taxon>
        <taxon>Craniata</taxon>
        <taxon>Vertebrata</taxon>
        <taxon>Euteleostomi</taxon>
        <taxon>Mammalia</taxon>
        <taxon>Eutheria</taxon>
        <taxon>Euarchontoglires</taxon>
        <taxon>Glires</taxon>
        <taxon>Rodentia</taxon>
        <taxon>Myomorpha</taxon>
        <taxon>Muroidea</taxon>
        <taxon>Muridae</taxon>
        <taxon>Murinae</taxon>
        <taxon>Rattus</taxon>
    </lineage>
</organism>
<accession>Q99ND9</accession>
<evidence type="ECO:0000250" key="1"/>
<evidence type="ECO:0000250" key="2">
    <source>
        <dbReference type="UniProtKB" id="Q9H446"/>
    </source>
</evidence>
<evidence type="ECO:0000255" key="3">
    <source>
        <dbReference type="PROSITE-ProRule" id="PRU00179"/>
    </source>
</evidence>
<evidence type="ECO:0000256" key="4">
    <source>
        <dbReference type="SAM" id="MobiDB-lite"/>
    </source>
</evidence>
<evidence type="ECO:0000305" key="5"/>
<sequence>MTDYGEEQRNELEALESIYPDSFTVLSENPPSFTITVTSEAGENDETVQTTLKFTYSEKYPDEAPLYEIFSQENLEDNDVSDILKLLALQAEENLGMVMIFTLVTAVQEKLNEIVDQIKTRREEEKKQKEKEAEEAEKKLFHGTPVTIENFLSWKAKFDAELLEIKKKRMKEEEQAGKNKLSGKQLFETDHNLDTSDIQFLEDAGNNVEVDESLFQEMDDLELEDGEDDPDYNPVAPGSDSSD</sequence>
<comment type="function">
    <text evidence="1">Protects DRG2 from proteolytic degradation.</text>
</comment>
<comment type="subunit">
    <text evidence="1">Interacts with DRG2 (By similarity). Interacts with androgen receptor.</text>
</comment>
<comment type="similarity">
    <text evidence="5">Belongs to the RWDD1/GIR2 family.</text>
</comment>
<feature type="initiator methionine" description="Removed" evidence="2">
    <location>
        <position position="1"/>
    </location>
</feature>
<feature type="chain" id="PRO_0000097542" description="RWD domain-containing protein 1">
    <location>
        <begin position="2"/>
        <end position="243"/>
    </location>
</feature>
<feature type="domain" description="RWD" evidence="3">
    <location>
        <begin position="10"/>
        <end position="114"/>
    </location>
</feature>
<feature type="region of interest" description="Interaction with DRG2" evidence="1">
    <location>
        <begin position="142"/>
        <end position="197"/>
    </location>
</feature>
<feature type="region of interest" description="Disordered" evidence="4">
    <location>
        <begin position="208"/>
        <end position="243"/>
    </location>
</feature>
<feature type="compositionally biased region" description="Acidic residues" evidence="4">
    <location>
        <begin position="209"/>
        <end position="231"/>
    </location>
</feature>
<feature type="modified residue" description="N-acetylthreonine" evidence="2">
    <location>
        <position position="2"/>
    </location>
</feature>
<feature type="modified residue" description="Phosphothreonine" evidence="2">
    <location>
        <position position="144"/>
    </location>
</feature>
<protein>
    <recommendedName>
        <fullName>RWD domain-containing protein 1</fullName>
    </recommendedName>
    <alternativeName>
        <fullName>Small androgen receptor-interacting protein</fullName>
    </alternativeName>
</protein>
<reference key="1">
    <citation type="submission" date="1999-01" db="EMBL/GenBank/DDBJ databases">
        <title>A small novel protein interacts with androgen receptor.</title>
        <authorList>
            <person name="Rouleau N."/>
            <person name="Reeben M."/>
            <person name="Palvimo J.J."/>
            <person name="Janne O.A."/>
        </authorList>
    </citation>
    <scope>NUCLEOTIDE SEQUENCE [MRNA]</scope>
</reference>
<dbReference type="EMBL" id="AJ132390">
    <property type="protein sequence ID" value="CAC24710.1"/>
    <property type="molecule type" value="mRNA"/>
</dbReference>
<dbReference type="RefSeq" id="NP_671487.1">
    <property type="nucleotide sequence ID" value="NM_147146.2"/>
</dbReference>
<dbReference type="BMRB" id="Q99ND9"/>
<dbReference type="SMR" id="Q99ND9"/>
<dbReference type="FunCoup" id="Q99ND9">
    <property type="interactions" value="2985"/>
</dbReference>
<dbReference type="STRING" id="10116.ENSRNOP00000062656"/>
<dbReference type="PhosphoSitePlus" id="Q99ND9"/>
<dbReference type="jPOST" id="Q99ND9"/>
<dbReference type="PaxDb" id="10116-ENSRNOP00000062656"/>
<dbReference type="Ensembl" id="ENSRNOT00000095504.1">
    <property type="protein sequence ID" value="ENSRNOP00000085613.1"/>
    <property type="gene ID" value="ENSRNOG00000042916.4"/>
</dbReference>
<dbReference type="GeneID" id="259218"/>
<dbReference type="KEGG" id="rno:259218"/>
<dbReference type="UCSC" id="RGD:631337">
    <property type="organism name" value="rat"/>
</dbReference>
<dbReference type="AGR" id="RGD:631337"/>
<dbReference type="CTD" id="51389"/>
<dbReference type="RGD" id="631337">
    <property type="gene designation" value="Rwdd1"/>
</dbReference>
<dbReference type="eggNOG" id="KOG4018">
    <property type="taxonomic scope" value="Eukaryota"/>
</dbReference>
<dbReference type="GeneTree" id="ENSGT00390000009168"/>
<dbReference type="HOGENOM" id="CLU_084528_2_0_1"/>
<dbReference type="InParanoid" id="Q99ND9"/>
<dbReference type="OMA" id="QWDEHKK"/>
<dbReference type="OrthoDB" id="277175at2759"/>
<dbReference type="PhylomeDB" id="Q99ND9"/>
<dbReference type="Reactome" id="R-RNO-9629569">
    <property type="pathway name" value="Protein hydroxylation"/>
</dbReference>
<dbReference type="PRO" id="PR:Q99ND9"/>
<dbReference type="Proteomes" id="UP000002494">
    <property type="component" value="Chromosome 20"/>
</dbReference>
<dbReference type="Bgee" id="ENSRNOG00000042916">
    <property type="expression patterns" value="Expressed in pancreas and 19 other cell types or tissues"/>
</dbReference>
<dbReference type="GO" id="GO:0005737">
    <property type="term" value="C:cytoplasm"/>
    <property type="evidence" value="ECO:0000266"/>
    <property type="project" value="RGD"/>
</dbReference>
<dbReference type="GO" id="GO:0030521">
    <property type="term" value="P:androgen receptor signaling pathway"/>
    <property type="evidence" value="ECO:0000266"/>
    <property type="project" value="RGD"/>
</dbReference>
<dbReference type="GO" id="GO:0034599">
    <property type="term" value="P:cellular response to oxidative stress"/>
    <property type="evidence" value="ECO:0000266"/>
    <property type="project" value="RGD"/>
</dbReference>
<dbReference type="GO" id="GO:0071394">
    <property type="term" value="P:cellular response to testosterone stimulus"/>
    <property type="evidence" value="ECO:0000266"/>
    <property type="project" value="RGD"/>
</dbReference>
<dbReference type="GO" id="GO:0002181">
    <property type="term" value="P:cytoplasmic translation"/>
    <property type="evidence" value="ECO:0000318"/>
    <property type="project" value="GO_Central"/>
</dbReference>
<dbReference type="CDD" id="cd23816">
    <property type="entry name" value="RWD_RWDD1"/>
    <property type="match status" value="1"/>
</dbReference>
<dbReference type="FunFam" id="3.10.110.10:FF:000064">
    <property type="entry name" value="RWD domain-containing protein 1"/>
    <property type="match status" value="1"/>
</dbReference>
<dbReference type="Gene3D" id="6.20.400.10">
    <property type="match status" value="1"/>
</dbReference>
<dbReference type="Gene3D" id="3.10.110.10">
    <property type="entry name" value="Ubiquitin Conjugating Enzyme"/>
    <property type="match status" value="1"/>
</dbReference>
<dbReference type="InterPro" id="IPR040213">
    <property type="entry name" value="GIR2-like"/>
</dbReference>
<dbReference type="InterPro" id="IPR006575">
    <property type="entry name" value="RWD_dom"/>
</dbReference>
<dbReference type="InterPro" id="IPR016135">
    <property type="entry name" value="UBQ-conjugating_enzyme/RWD"/>
</dbReference>
<dbReference type="InterPro" id="IPR032378">
    <property type="entry name" value="ZC3H15/TMA46_C"/>
</dbReference>
<dbReference type="PANTHER" id="PTHR12292">
    <property type="entry name" value="RWD DOMAIN-CONTAINING PROTEIN"/>
    <property type="match status" value="1"/>
</dbReference>
<dbReference type="Pfam" id="PF16543">
    <property type="entry name" value="DFRP_C"/>
    <property type="match status" value="1"/>
</dbReference>
<dbReference type="Pfam" id="PF05773">
    <property type="entry name" value="RWD"/>
    <property type="match status" value="1"/>
</dbReference>
<dbReference type="SMART" id="SM00591">
    <property type="entry name" value="RWD"/>
    <property type="match status" value="1"/>
</dbReference>
<dbReference type="SUPFAM" id="SSF54495">
    <property type="entry name" value="UBC-like"/>
    <property type="match status" value="1"/>
</dbReference>
<dbReference type="PROSITE" id="PS50908">
    <property type="entry name" value="RWD"/>
    <property type="match status" value="1"/>
</dbReference>
<keyword id="KW-0007">Acetylation</keyword>
<keyword id="KW-0597">Phosphoprotein</keyword>
<keyword id="KW-1185">Reference proteome</keyword>
<name>RWDD1_RAT</name>
<gene>
    <name type="primary">Rwdd1</name>
    <name type="synonym">Sarip</name>
</gene>
<proteinExistence type="evidence at transcript level"/>